<dbReference type="EMBL" id="U18530">
    <property type="protein sequence ID" value="AAB64494.1"/>
    <property type="molecule type" value="Genomic_DNA"/>
</dbReference>
<dbReference type="EMBL" id="BK006939">
    <property type="protein sequence ID" value="DAA07637.1"/>
    <property type="molecule type" value="Genomic_DNA"/>
</dbReference>
<dbReference type="PIR" id="S50442">
    <property type="entry name" value="S50442"/>
</dbReference>
<dbReference type="RefSeq" id="NP_010899.3">
    <property type="nucleotide sequence ID" value="NM_001178832.3"/>
</dbReference>
<dbReference type="SMR" id="P39996"/>
<dbReference type="BioGRID" id="36714">
    <property type="interactions" value="43"/>
</dbReference>
<dbReference type="DIP" id="DIP-2062N"/>
<dbReference type="FunCoup" id="P39996">
    <property type="interactions" value="71"/>
</dbReference>
<dbReference type="IntAct" id="P39996">
    <property type="interactions" value="13"/>
</dbReference>
<dbReference type="MINT" id="P39996"/>
<dbReference type="STRING" id="4932.YEL017W"/>
<dbReference type="iPTMnet" id="P39996"/>
<dbReference type="PaxDb" id="4932-YEL017W"/>
<dbReference type="PeptideAtlas" id="P39996"/>
<dbReference type="EnsemblFungi" id="YEL017W_mRNA">
    <property type="protein sequence ID" value="YEL017W"/>
    <property type="gene ID" value="YEL017W"/>
</dbReference>
<dbReference type="GeneID" id="856698"/>
<dbReference type="KEGG" id="sce:YEL017W"/>
<dbReference type="AGR" id="SGD:S000000743"/>
<dbReference type="SGD" id="S000000743">
    <property type="gene designation" value="GTT3"/>
</dbReference>
<dbReference type="VEuPathDB" id="FungiDB:YEL017W"/>
<dbReference type="eggNOG" id="ENOG502S2H3">
    <property type="taxonomic scope" value="Eukaryota"/>
</dbReference>
<dbReference type="HOGENOM" id="CLU_052849_0_0_1"/>
<dbReference type="InParanoid" id="P39996"/>
<dbReference type="OMA" id="YVNFIRY"/>
<dbReference type="OrthoDB" id="4034134at2759"/>
<dbReference type="BioCyc" id="YEAST:G3O-30142-MONOMER"/>
<dbReference type="BioGRID-ORCS" id="856698">
    <property type="hits" value="0 hits in 10 CRISPR screens"/>
</dbReference>
<dbReference type="PRO" id="PR:P39996"/>
<dbReference type="Proteomes" id="UP000002311">
    <property type="component" value="Chromosome V"/>
</dbReference>
<dbReference type="RNAct" id="P39996">
    <property type="molecule type" value="protein"/>
</dbReference>
<dbReference type="GO" id="GO:0016020">
    <property type="term" value="C:membrane"/>
    <property type="evidence" value="ECO:0000318"/>
    <property type="project" value="GO_Central"/>
</dbReference>
<dbReference type="GO" id="GO:0031965">
    <property type="term" value="C:nuclear membrane"/>
    <property type="evidence" value="ECO:0007669"/>
    <property type="project" value="UniProtKB-SubCell"/>
</dbReference>
<dbReference type="GO" id="GO:0034399">
    <property type="term" value="C:nuclear periphery"/>
    <property type="evidence" value="ECO:0007005"/>
    <property type="project" value="SGD"/>
</dbReference>
<dbReference type="InterPro" id="IPR038872">
    <property type="entry name" value="Put_GTT3"/>
</dbReference>
<dbReference type="PANTHER" id="PTHR41807">
    <property type="entry name" value="GLUTATHIONE TRANSFERASE 3"/>
    <property type="match status" value="1"/>
</dbReference>
<dbReference type="PANTHER" id="PTHR41807:SF1">
    <property type="entry name" value="GLUTATHIONE TRANSFERASE 3"/>
    <property type="match status" value="1"/>
</dbReference>
<reference key="1">
    <citation type="journal article" date="1997" name="Nature">
        <title>The nucleotide sequence of Saccharomyces cerevisiae chromosome V.</title>
        <authorList>
            <person name="Dietrich F.S."/>
            <person name="Mulligan J.T."/>
            <person name="Hennessy K.M."/>
            <person name="Yelton M.A."/>
            <person name="Allen E."/>
            <person name="Araujo R."/>
            <person name="Aviles E."/>
            <person name="Berno A."/>
            <person name="Brennan T."/>
            <person name="Carpenter J."/>
            <person name="Chen E."/>
            <person name="Cherry J.M."/>
            <person name="Chung E."/>
            <person name="Duncan M."/>
            <person name="Guzman E."/>
            <person name="Hartzell G."/>
            <person name="Hunicke-Smith S."/>
            <person name="Hyman R.W."/>
            <person name="Kayser A."/>
            <person name="Komp C."/>
            <person name="Lashkari D."/>
            <person name="Lew H."/>
            <person name="Lin D."/>
            <person name="Mosedale D."/>
            <person name="Nakahara K."/>
            <person name="Namath A."/>
            <person name="Norgren R."/>
            <person name="Oefner P."/>
            <person name="Oh C."/>
            <person name="Petel F.X."/>
            <person name="Roberts D."/>
            <person name="Sehl P."/>
            <person name="Schramm S."/>
            <person name="Shogren T."/>
            <person name="Smith V."/>
            <person name="Taylor P."/>
            <person name="Wei Y."/>
            <person name="Botstein D."/>
            <person name="Davis R.W."/>
        </authorList>
    </citation>
    <scope>NUCLEOTIDE SEQUENCE [LARGE SCALE GENOMIC DNA]</scope>
    <source>
        <strain>ATCC 204508 / S288c</strain>
    </source>
</reference>
<reference key="2">
    <citation type="journal article" date="2014" name="G3 (Bethesda)">
        <title>The reference genome sequence of Saccharomyces cerevisiae: Then and now.</title>
        <authorList>
            <person name="Engel S.R."/>
            <person name="Dietrich F.S."/>
            <person name="Fisk D.G."/>
            <person name="Binkley G."/>
            <person name="Balakrishnan R."/>
            <person name="Costanzo M.C."/>
            <person name="Dwight S.S."/>
            <person name="Hitz B.C."/>
            <person name="Karra K."/>
            <person name="Nash R.S."/>
            <person name="Weng S."/>
            <person name="Wong E.D."/>
            <person name="Lloyd P."/>
            <person name="Skrzypek M.S."/>
            <person name="Miyasato S.R."/>
            <person name="Simison M."/>
            <person name="Cherry J.M."/>
        </authorList>
    </citation>
    <scope>GENOME REANNOTATION</scope>
    <source>
        <strain>ATCC 204508 / S288c</strain>
    </source>
</reference>
<reference key="3">
    <citation type="journal article" date="2003" name="Nature">
        <title>Global analysis of protein localization in budding yeast.</title>
        <authorList>
            <person name="Huh W.-K."/>
            <person name="Falvo J.V."/>
            <person name="Gerke L.C."/>
            <person name="Carroll A.S."/>
            <person name="Howson R.W."/>
            <person name="Weissman J.S."/>
            <person name="O'Shea E.K."/>
        </authorList>
    </citation>
    <scope>SUBCELLULAR LOCATION [LARGE SCALE ANALYSIS]</scope>
</reference>
<reference key="4">
    <citation type="journal article" date="2003" name="Nature">
        <title>Global analysis of protein expression in yeast.</title>
        <authorList>
            <person name="Ghaemmaghami S."/>
            <person name="Huh W.-K."/>
            <person name="Bower K."/>
            <person name="Howson R.W."/>
            <person name="Belle A."/>
            <person name="Dephoure N."/>
            <person name="O'Shea E.K."/>
            <person name="Weissman J.S."/>
        </authorList>
    </citation>
    <scope>LEVEL OF PROTEIN EXPRESSION [LARGE SCALE ANALYSIS]</scope>
</reference>
<reference key="5">
    <citation type="journal article" date="2006" name="Proc. Natl. Acad. Sci. U.S.A.">
        <title>A global topology map of the Saccharomyces cerevisiae membrane proteome.</title>
        <authorList>
            <person name="Kim H."/>
            <person name="Melen K."/>
            <person name="Oesterberg M."/>
            <person name="von Heijne G."/>
        </authorList>
    </citation>
    <scope>TOPOLOGY [LARGE SCALE ANALYSIS]</scope>
    <source>
        <strain>ATCC 208353 / W303-1A</strain>
    </source>
</reference>
<reference key="6">
    <citation type="journal article" date="2007" name="J. Proteome Res.">
        <title>Large-scale phosphorylation analysis of alpha-factor-arrested Saccharomyces cerevisiae.</title>
        <authorList>
            <person name="Li X."/>
            <person name="Gerber S.A."/>
            <person name="Rudner A.D."/>
            <person name="Beausoleil S.A."/>
            <person name="Haas W."/>
            <person name="Villen J."/>
            <person name="Elias J.E."/>
            <person name="Gygi S.P."/>
        </authorList>
    </citation>
    <scope>PHOSPHORYLATION [LARGE SCALE ANALYSIS] AT SER-116</scope>
    <scope>IDENTIFICATION BY MASS SPECTROMETRY [LARGE SCALE ANALYSIS]</scope>
    <source>
        <strain>ADR376</strain>
    </source>
</reference>
<reference key="7">
    <citation type="journal article" date="2009" name="Science">
        <title>Global analysis of Cdk1 substrate phosphorylation sites provides insights into evolution.</title>
        <authorList>
            <person name="Holt L.J."/>
            <person name="Tuch B.B."/>
            <person name="Villen J."/>
            <person name="Johnson A.D."/>
            <person name="Gygi S.P."/>
            <person name="Morgan D.O."/>
        </authorList>
    </citation>
    <scope>PHOSPHORYLATION [LARGE SCALE ANALYSIS] AT SER-66; SER-72; SER-99 AND SER-116</scope>
    <scope>IDENTIFICATION BY MASS SPECTROMETRY [LARGE SCALE ANALYSIS]</scope>
</reference>
<gene>
    <name type="primary">GTT3</name>
    <name type="ordered locus">YEL017W</name>
</gene>
<proteinExistence type="evidence at protein level"/>
<protein>
    <recommendedName>
        <fullName>Glutathione transferase 3</fullName>
    </recommendedName>
</protein>
<comment type="subcellular location">
    <subcellularLocation>
        <location evidence="3">Nucleus membrane</location>
        <topology evidence="3">Multi-pass membrane protein</topology>
    </subcellularLocation>
</comment>
<comment type="miscellaneous">
    <text evidence="4">Present with 1300 molecules/cell in log phase SD medium.</text>
</comment>
<name>GTT3_YEAST</name>
<sequence length="337" mass="38235">MPTKSTFSRWKKADLIDLANKLEIDGFPNYAKKSDMIDYLESHLNHLEKPVDFKDDYPELRSFYESMTVDQSKDERNEYGSGSGNGSGSGSCDTATNDSDLEKAYIKEDDDEKPQSGDETSATKPLSSRNANSNAKTNFNLLDFSTDNDSSTSAFTKFKFNFQEYLSDIRYQTQKLNENVQDYLSTISAVDTIFSLLEFSFLVRNILAAGQPTSSSSLASSLEAAVAAHNKYQYTLDFCLPILTWLLFFRGIPTLVSYYINFIRYDLNIELDPMTFNLTKFLISLAIFKTCNNKNIDFHSFRCVNQLWTQLCTVNRSLGMVPLVFSMVSCLLTLYVL</sequence>
<evidence type="ECO:0000255" key="1"/>
<evidence type="ECO:0000256" key="2">
    <source>
        <dbReference type="SAM" id="MobiDB-lite"/>
    </source>
</evidence>
<evidence type="ECO:0000269" key="3">
    <source>
    </source>
</evidence>
<evidence type="ECO:0000269" key="4">
    <source>
    </source>
</evidence>
<evidence type="ECO:0007744" key="5">
    <source>
    </source>
</evidence>
<evidence type="ECO:0007744" key="6">
    <source>
    </source>
</evidence>
<feature type="chain" id="PRO_0000202611" description="Glutathione transferase 3">
    <location>
        <begin position="1"/>
        <end position="337"/>
    </location>
</feature>
<feature type="topological domain" description="Cytoplasmic" evidence="1">
    <location>
        <begin position="1"/>
        <end position="239"/>
    </location>
</feature>
<feature type="transmembrane region" description="Helical" evidence="1">
    <location>
        <begin position="240"/>
        <end position="260"/>
    </location>
</feature>
<feature type="topological domain" description="Perinuclear space" evidence="1">
    <location>
        <begin position="261"/>
        <end position="313"/>
    </location>
</feature>
<feature type="transmembrane region" description="Helical" evidence="1">
    <location>
        <begin position="314"/>
        <end position="336"/>
    </location>
</feature>
<feature type="topological domain" description="Cytoplasmic" evidence="1">
    <location>
        <position position="337"/>
    </location>
</feature>
<feature type="region of interest" description="Disordered" evidence="2">
    <location>
        <begin position="66"/>
        <end position="95"/>
    </location>
</feature>
<feature type="region of interest" description="Disordered" evidence="2">
    <location>
        <begin position="107"/>
        <end position="132"/>
    </location>
</feature>
<feature type="compositionally biased region" description="Polar residues" evidence="2">
    <location>
        <begin position="117"/>
        <end position="132"/>
    </location>
</feature>
<feature type="modified residue" description="Phosphoserine" evidence="6">
    <location>
        <position position="66"/>
    </location>
</feature>
<feature type="modified residue" description="Phosphoserine" evidence="6">
    <location>
        <position position="72"/>
    </location>
</feature>
<feature type="modified residue" description="Phosphoserine" evidence="6">
    <location>
        <position position="99"/>
    </location>
</feature>
<feature type="modified residue" description="Phosphoserine" evidence="5 6">
    <location>
        <position position="116"/>
    </location>
</feature>
<keyword id="KW-0472">Membrane</keyword>
<keyword id="KW-0539">Nucleus</keyword>
<keyword id="KW-0597">Phosphoprotein</keyword>
<keyword id="KW-1185">Reference proteome</keyword>
<keyword id="KW-0812">Transmembrane</keyword>
<keyword id="KW-1133">Transmembrane helix</keyword>
<organism>
    <name type="scientific">Saccharomyces cerevisiae (strain ATCC 204508 / S288c)</name>
    <name type="common">Baker's yeast</name>
    <dbReference type="NCBI Taxonomy" id="559292"/>
    <lineage>
        <taxon>Eukaryota</taxon>
        <taxon>Fungi</taxon>
        <taxon>Dikarya</taxon>
        <taxon>Ascomycota</taxon>
        <taxon>Saccharomycotina</taxon>
        <taxon>Saccharomycetes</taxon>
        <taxon>Saccharomycetales</taxon>
        <taxon>Saccharomycetaceae</taxon>
        <taxon>Saccharomyces</taxon>
    </lineage>
</organism>
<accession>P39996</accession>
<accession>D3DLN3</accession>